<geneLocation type="plasmid">
    <name>pFZ1</name>
</geneLocation>
<feature type="chain" id="PRO_0000066439" description="Uncharacterized protein ORF5'">
    <location>
        <begin position="1"/>
        <end position="499"/>
    </location>
</feature>
<proteinExistence type="predicted"/>
<dbReference type="EMBL" id="X68367">
    <property type="protein sequence ID" value="CAA48444.1"/>
    <property type="molecule type" value="Genomic_DNA"/>
</dbReference>
<dbReference type="PIR" id="S30320">
    <property type="entry name" value="S26454"/>
</dbReference>
<dbReference type="RefSeq" id="NP_039772.1">
    <property type="nucleotide sequence ID" value="NC_001337.1"/>
</dbReference>
<dbReference type="RefSeq" id="WP_010889859.1">
    <property type="nucleotide sequence ID" value="NC_001337.1"/>
</dbReference>
<dbReference type="SMR" id="P29579"/>
<dbReference type="GeneID" id="24855014"/>
<dbReference type="GeneID" id="77402442"/>
<dbReference type="PRO" id="PR:P29579"/>
<dbReference type="Gene3D" id="2.60.40.10">
    <property type="entry name" value="Immunoglobulins"/>
    <property type="match status" value="2"/>
</dbReference>
<dbReference type="InterPro" id="IPR051172">
    <property type="entry name" value="Chlamydia_OmcB"/>
</dbReference>
<dbReference type="InterPro" id="IPR047589">
    <property type="entry name" value="DUF11_rpt"/>
</dbReference>
<dbReference type="InterPro" id="IPR013783">
    <property type="entry name" value="Ig-like_fold"/>
</dbReference>
<dbReference type="InterPro" id="IPR001434">
    <property type="entry name" value="OmcB-like_DUF11"/>
</dbReference>
<dbReference type="NCBIfam" id="TIGR01451">
    <property type="entry name" value="B_ant_repeat"/>
    <property type="match status" value="2"/>
</dbReference>
<dbReference type="PANTHER" id="PTHR34819:SF5">
    <property type="entry name" value="CONSERVED REPEAT DOMAIN PROTEIN"/>
    <property type="match status" value="1"/>
</dbReference>
<dbReference type="PANTHER" id="PTHR34819">
    <property type="entry name" value="LARGE CYSTEINE-RICH PERIPLASMIC PROTEIN OMCB"/>
    <property type="match status" value="1"/>
</dbReference>
<dbReference type="Pfam" id="PF01345">
    <property type="entry name" value="DUF11"/>
    <property type="match status" value="3"/>
</dbReference>
<accession>P29579</accession>
<name>YPZ5_METTF</name>
<protein>
    <recommendedName>
        <fullName>Uncharacterized protein ORF5'</fullName>
    </recommendedName>
</protein>
<keyword id="KW-0614">Plasmid</keyword>
<sequence>MRNGTLLLAALLAVFILAGSSAAADVGVELDKNNTKPVYNSTLRVKVIAKAGNQNVQNAVATVKVPEGLVLQDYYTAQGYYDLETGTWEIGDIPAYEERSLTLVCLLNRTGNVTVTANVTADGDENPANNNAQLKFRVRGIADLELNVTSSKQSARLGDTVTFNVKLKNRGPHAANNINVANFFSGGLAIQSYSYTTGYFDDVAREWILETLDTGEEATLTVVCLVNRTGDLSDYVSVREVDEGDVNVYNNIARASVAVKGTDLDLDLSVSKPRAYQGDVVNVVCRVKNNGPEAAQNARVNLQLPANLQVQNVQVDRGTYSNGVWVIGDLADNEAALLNITARVVSAGNFTVNATAVSPAIDDSNPVNNDDTALVSAAIPKKALKVRIKNNSAVTIRVLLYVNINDHGKITRKTYNFYLKNGLSRDLSLGYFQLGTSALFKQYTYNTNYRPRTVSYENTYNATSVITQRVNVSGVKGRQKAPVVRIATLLLDENGTSLQ</sequence>
<reference key="1">
    <citation type="journal article" date="1992" name="Nucleic Acids Res.">
        <title>Modular organization of related Archaeal plasmids encoding different restriction-modification systems in Methanobacterium thermoformicicum.</title>
        <authorList>
            <person name="Noelling J."/>
            <person name="van Eeden F.J.M."/>
            <person name="Eggen R.I.L."/>
            <person name="de Vos W.M."/>
        </authorList>
    </citation>
    <scope>NUCLEOTIDE SEQUENCE [GENOMIC DNA]</scope>
    <source>
        <strain>DSM 3720 / Z-245</strain>
    </source>
</reference>
<organism>
    <name type="scientific">Methanothermobacter thermautotrophicus</name>
    <name type="common">Methanobacterium thermoformicicum</name>
    <dbReference type="NCBI Taxonomy" id="145262"/>
    <lineage>
        <taxon>Archaea</taxon>
        <taxon>Methanobacteriati</taxon>
        <taxon>Methanobacteriota</taxon>
        <taxon>Methanomada group</taxon>
        <taxon>Methanobacteria</taxon>
        <taxon>Methanobacteriales</taxon>
        <taxon>Methanobacteriaceae</taxon>
        <taxon>Methanothermobacter</taxon>
    </lineage>
</organism>